<feature type="chain" id="PRO_0000223141" description="UPF0328 protein ECU09_2010">
    <location>
        <begin position="1"/>
        <end position="245"/>
    </location>
</feature>
<proteinExistence type="inferred from homology"/>
<keyword id="KW-1185">Reference proteome</keyword>
<protein>
    <recommendedName>
        <fullName>UPF0328 protein ECU09_2010</fullName>
    </recommendedName>
</protein>
<reference key="1">
    <citation type="journal article" date="2001" name="Nature">
        <title>Genome sequence and gene compaction of the eukaryote parasite Encephalitozoon cuniculi.</title>
        <authorList>
            <person name="Katinka M.D."/>
            <person name="Duprat S."/>
            <person name="Cornillot E."/>
            <person name="Metenier G."/>
            <person name="Thomarat F."/>
            <person name="Prensier G."/>
            <person name="Barbe V."/>
            <person name="Peyretaillade E."/>
            <person name="Brottier P."/>
            <person name="Wincker P."/>
            <person name="Delbac F."/>
            <person name="El Alaoui H."/>
            <person name="Peyret P."/>
            <person name="Saurin W."/>
            <person name="Gouy M."/>
            <person name="Weissenbach J."/>
            <person name="Vivares C.P."/>
        </authorList>
    </citation>
    <scope>NUCLEOTIDE SEQUENCE [LARGE SCALE GENOMIC DNA]</scope>
    <source>
        <strain>GB-M1</strain>
    </source>
</reference>
<gene>
    <name type="ordered locus">ECU09_2010</name>
</gene>
<evidence type="ECO:0000305" key="1"/>
<dbReference type="EMBL" id="AL590451">
    <property type="protein sequence ID" value="CAD27174.1"/>
    <property type="molecule type" value="Genomic_DNA"/>
</dbReference>
<dbReference type="RefSeq" id="NP_001402455.1">
    <property type="nucleotide sequence ID" value="NM_001415522.1"/>
</dbReference>
<dbReference type="RefSeq" id="XP_955755.1">
    <property type="nucleotide sequence ID" value="XM_950662.1"/>
</dbReference>
<dbReference type="GeneID" id="860543"/>
<dbReference type="VEuPathDB" id="MicrosporidiaDB:ECU09_2010"/>
<dbReference type="HOGENOM" id="CLU_059413_0_0_1"/>
<dbReference type="InParanoid" id="Q8STK1"/>
<dbReference type="Proteomes" id="UP000000819">
    <property type="component" value="Chromosome IX"/>
</dbReference>
<dbReference type="InterPro" id="IPR019081">
    <property type="entry name" value="UPF0328"/>
</dbReference>
<dbReference type="Pfam" id="PF09591">
    <property type="entry name" value="DUF2463"/>
    <property type="match status" value="1"/>
</dbReference>
<organism>
    <name type="scientific">Encephalitozoon cuniculi (strain GB-M1)</name>
    <name type="common">Microsporidian parasite</name>
    <dbReference type="NCBI Taxonomy" id="284813"/>
    <lineage>
        <taxon>Eukaryota</taxon>
        <taxon>Fungi</taxon>
        <taxon>Fungi incertae sedis</taxon>
        <taxon>Microsporidia</taxon>
        <taxon>Unikaryonidae</taxon>
        <taxon>Encephalitozoon</taxon>
    </lineage>
</organism>
<comment type="similarity">
    <text evidence="1">Belongs to the UPF0328 family.</text>
</comment>
<name>Y9K1_ENCCU</name>
<sequence length="245" mass="28450">MNATHILESHEANEQHHATNRSYWEVTYNILVIMSIVFSMATYLILDKDRFEKNPLLRFAIILLPLSCSAIQYLFLLYTNWKSNYEPEGTLHKALYYFFNVLLIAFAIISILSIIVLPINGWGNESDIAIYSVILPFFVVWSVDLVSTINDLTMETVHLIDTHYTMLFDLMMIITIIVNPKYSSQGYRYRQSPTPSSSRSTSSRTTKMRIVLLIIMLILAISMYAFIAWKCLTFLRNMQGKKWCN</sequence>
<accession>Q8STK1</accession>